<gene>
    <name evidence="1" type="primary">rpoB</name>
</gene>
<protein>
    <recommendedName>
        <fullName evidence="1">DNA-directed RNA polymerase subunit beta</fullName>
        <shortName evidence="1">RNAP subunit beta</shortName>
        <ecNumber evidence="1">2.7.7.6</ecNumber>
    </recommendedName>
    <alternativeName>
        <fullName evidence="1">RNA polymerase subunit beta</fullName>
    </alternativeName>
    <alternativeName>
        <fullName evidence="1">Transcriptase subunit beta</fullName>
    </alternativeName>
</protein>
<organism>
    <name type="scientific">Neorickettsia sennetsu</name>
    <name type="common">Ehrlichia sennetsu</name>
    <dbReference type="NCBI Taxonomy" id="951"/>
    <lineage>
        <taxon>Bacteria</taxon>
        <taxon>Pseudomonadati</taxon>
        <taxon>Pseudomonadota</taxon>
        <taxon>Alphaproteobacteria</taxon>
        <taxon>Rickettsiales</taxon>
        <taxon>Anaplasmataceae</taxon>
        <taxon>Neorickettsia</taxon>
    </lineage>
</organism>
<feature type="chain" id="PRO_0000047897" description="DNA-directed RNA polymerase subunit beta">
    <location>
        <begin position="1"/>
        <end position="1357"/>
    </location>
</feature>
<keyword id="KW-0240">DNA-directed RNA polymerase</keyword>
<keyword id="KW-0548">Nucleotidyltransferase</keyword>
<keyword id="KW-0804">Transcription</keyword>
<keyword id="KW-0808">Transferase</keyword>
<proteinExistence type="inferred from homology"/>
<sequence length="1357" mass="151551">MSEFHRLYFDELLFDFPDLVKVQKDSYASFVGGGDTGFSISDIFASVFPVNDGYGRASLEFVSCRMGEPKHDEYGCVERGITYSAPLRAILRLVVFGDETSGEGSEGVSTEPAVKDVREQEIYMGDIPIMSKNGTFIINGVERVVVSQMHRAPGVFFDNDKARSISGKLNYIARIIPYRGSWLDFEFDAKDVLYFRIDKKRKLPVTFLLRALGLSNKDIFAQFCEVSECRLTKDGKWTVCFVPEKFKGVRLQYDLINAETGELVLAKGNRISIVLARNLYAKGLRYCYMDLEVMKDMYLADDLVSTKGEVLLPHGTKLTKEHVAKLEFLDVDSIKLVELKGNYVFSTVLQYDCSYEEAMLSIYRVVRPGEIPSVESAEKLFESLFFSPERYDLLNVGRIRLNAKFNLSHDESLTVLTKEDIFCTVKELALLQREVGDVDDIDHLGNRRVRSVGEFMDNQFRIGLVRMAKVIVENMATADFDTVMPCEMINSKILGAVIREFFMSSALSQFMDQTNPLSEITHKRRISALGPGGLNRGRAGFEVRDVHTTHYGRICATETPEGATIGLINSLAIYAKINKYGFIETPYRYVRDGRVTDEVTYLSAIDEIKANICQASVRVDEEGYIVDDLVYCRRNYENVFIPRSEVQFADVSAKQIVSVAASLIPFLENDDANRALMGSNMQRQAVPLIMPEAPLVGTGMEGYVARGSGAVIVAKRAGVVQYIDARNIVVASESKDDFWIDSYTLCKFRKSNHNTCIHQRCVVHQGQRVKKGDILADGPAIQKGELALGRNLVVAFLSWRGYNFEDSVVISSNVVRDDLFTSVHLEGFECVVRDTRLGPEEITRDVSGVAEEFLHCLDEFGIACVGANVEAGDVLVGKVTPKSSSPVTPEEKLLRAIFGEKAIDVKDSSLYLPPGVSGCVVDVKVLQRRGIEKVGRALLIEKQAIDAEKTRRDHELAVLTNYIYSLLKEMLVGKVALSTLAPISKGDLITEEALEKIDRENWWKISVDGISSIKLLRQRFVDRFDEINKTYEENFEKIRGDDDLAQGVLMVVKVFVAVKHTLQPGDKMSGRHGNKGVISRIVPAEDTPYLADGTPVDIILNPLGVPSRMNVGQILETHLGWAAYNLGKKISKLLDEGNYSEVKSLVLEIYKNDRKMMARLNEMTDAEIVEYSRSLRGGVPVAASVFEGPKTDEIERLLVLAGKDPSGQEVLYDGVTGEKFDRKVTVGCKYMLKLHHLVNDKIHARSIGSTVDTQQPLGGKSHFGGQRFGEMECWALQAYGATFALQEMLTIKSDDVVGRVNVYDSIVRGDNDFYYGVPESFNVMMNELRALCLNVEFCSDLEKKKDFGDLALAASGQ</sequence>
<dbReference type="EC" id="2.7.7.6" evidence="1"/>
<dbReference type="EMBL" id="AF401088">
    <property type="protein sequence ID" value="AAK83924.1"/>
    <property type="molecule type" value="Genomic_DNA"/>
</dbReference>
<dbReference type="SMR" id="Q93MK9"/>
<dbReference type="GO" id="GO:0000428">
    <property type="term" value="C:DNA-directed RNA polymerase complex"/>
    <property type="evidence" value="ECO:0007669"/>
    <property type="project" value="UniProtKB-KW"/>
</dbReference>
<dbReference type="GO" id="GO:0003677">
    <property type="term" value="F:DNA binding"/>
    <property type="evidence" value="ECO:0007669"/>
    <property type="project" value="UniProtKB-UniRule"/>
</dbReference>
<dbReference type="GO" id="GO:0003899">
    <property type="term" value="F:DNA-directed RNA polymerase activity"/>
    <property type="evidence" value="ECO:0007669"/>
    <property type="project" value="UniProtKB-UniRule"/>
</dbReference>
<dbReference type="GO" id="GO:0032549">
    <property type="term" value="F:ribonucleoside binding"/>
    <property type="evidence" value="ECO:0007669"/>
    <property type="project" value="InterPro"/>
</dbReference>
<dbReference type="GO" id="GO:0006351">
    <property type="term" value="P:DNA-templated transcription"/>
    <property type="evidence" value="ECO:0007669"/>
    <property type="project" value="UniProtKB-UniRule"/>
</dbReference>
<dbReference type="CDD" id="cd00653">
    <property type="entry name" value="RNA_pol_B_RPB2"/>
    <property type="match status" value="1"/>
</dbReference>
<dbReference type="Gene3D" id="2.40.50.100">
    <property type="match status" value="1"/>
</dbReference>
<dbReference type="Gene3D" id="2.40.50.150">
    <property type="match status" value="1"/>
</dbReference>
<dbReference type="Gene3D" id="3.90.1100.10">
    <property type="match status" value="2"/>
</dbReference>
<dbReference type="Gene3D" id="2.30.150.10">
    <property type="entry name" value="DNA-directed RNA polymerase, beta subunit, external 1 domain"/>
    <property type="match status" value="1"/>
</dbReference>
<dbReference type="Gene3D" id="2.40.270.10">
    <property type="entry name" value="DNA-directed RNA polymerase, subunit 2, domain 6"/>
    <property type="match status" value="1"/>
</dbReference>
<dbReference type="Gene3D" id="3.90.1800.10">
    <property type="entry name" value="RNA polymerase alpha subunit dimerisation domain"/>
    <property type="match status" value="1"/>
</dbReference>
<dbReference type="Gene3D" id="3.90.1110.10">
    <property type="entry name" value="RNA polymerase Rpb2, domain 2"/>
    <property type="match status" value="1"/>
</dbReference>
<dbReference type="HAMAP" id="MF_01321">
    <property type="entry name" value="RNApol_bact_RpoB"/>
    <property type="match status" value="1"/>
</dbReference>
<dbReference type="InterPro" id="IPR042107">
    <property type="entry name" value="DNA-dir_RNA_pol_bsu_ext_1_sf"/>
</dbReference>
<dbReference type="InterPro" id="IPR019462">
    <property type="entry name" value="DNA-dir_RNA_pol_bsu_external_1"/>
</dbReference>
<dbReference type="InterPro" id="IPR015712">
    <property type="entry name" value="DNA-dir_RNA_pol_su2"/>
</dbReference>
<dbReference type="InterPro" id="IPR007120">
    <property type="entry name" value="DNA-dir_RNAP_su2_dom"/>
</dbReference>
<dbReference type="InterPro" id="IPR037033">
    <property type="entry name" value="DNA-dir_RNAP_su2_hyb_sf"/>
</dbReference>
<dbReference type="InterPro" id="IPR010243">
    <property type="entry name" value="RNA_pol_bsu_bac"/>
</dbReference>
<dbReference type="InterPro" id="IPR007121">
    <property type="entry name" value="RNA_pol_bsu_CS"/>
</dbReference>
<dbReference type="InterPro" id="IPR007644">
    <property type="entry name" value="RNA_pol_bsu_protrusion"/>
</dbReference>
<dbReference type="InterPro" id="IPR007642">
    <property type="entry name" value="RNA_pol_Rpb2_2"/>
</dbReference>
<dbReference type="InterPro" id="IPR037034">
    <property type="entry name" value="RNA_pol_Rpb2_2_sf"/>
</dbReference>
<dbReference type="InterPro" id="IPR007645">
    <property type="entry name" value="RNA_pol_Rpb2_3"/>
</dbReference>
<dbReference type="InterPro" id="IPR007641">
    <property type="entry name" value="RNA_pol_Rpb2_7"/>
</dbReference>
<dbReference type="InterPro" id="IPR014724">
    <property type="entry name" value="RNA_pol_RPB2_OB-fold"/>
</dbReference>
<dbReference type="NCBIfam" id="NF001616">
    <property type="entry name" value="PRK00405.1"/>
    <property type="match status" value="1"/>
</dbReference>
<dbReference type="NCBIfam" id="TIGR02013">
    <property type="entry name" value="rpoB"/>
    <property type="match status" value="1"/>
</dbReference>
<dbReference type="PANTHER" id="PTHR20856">
    <property type="entry name" value="DNA-DIRECTED RNA POLYMERASE I SUBUNIT 2"/>
    <property type="match status" value="1"/>
</dbReference>
<dbReference type="Pfam" id="PF04563">
    <property type="entry name" value="RNA_pol_Rpb2_1"/>
    <property type="match status" value="1"/>
</dbReference>
<dbReference type="Pfam" id="PF04561">
    <property type="entry name" value="RNA_pol_Rpb2_2"/>
    <property type="match status" value="2"/>
</dbReference>
<dbReference type="Pfam" id="PF04565">
    <property type="entry name" value="RNA_pol_Rpb2_3"/>
    <property type="match status" value="1"/>
</dbReference>
<dbReference type="Pfam" id="PF10385">
    <property type="entry name" value="RNA_pol_Rpb2_45"/>
    <property type="match status" value="1"/>
</dbReference>
<dbReference type="Pfam" id="PF00562">
    <property type="entry name" value="RNA_pol_Rpb2_6"/>
    <property type="match status" value="1"/>
</dbReference>
<dbReference type="Pfam" id="PF04560">
    <property type="entry name" value="RNA_pol_Rpb2_7"/>
    <property type="match status" value="1"/>
</dbReference>
<dbReference type="SUPFAM" id="SSF64484">
    <property type="entry name" value="beta and beta-prime subunits of DNA dependent RNA-polymerase"/>
    <property type="match status" value="1"/>
</dbReference>
<dbReference type="PROSITE" id="PS01166">
    <property type="entry name" value="RNA_POL_BETA"/>
    <property type="match status" value="1"/>
</dbReference>
<evidence type="ECO:0000255" key="1">
    <source>
        <dbReference type="HAMAP-Rule" id="MF_01321"/>
    </source>
</evidence>
<reference key="1">
    <citation type="journal article" date="2003" name="Int. J. Syst. Evol. Microbiol.">
        <title>RNA polymerase beta-subunit-based phylogeny of Ehrlichia spp., Anaplasma spp., Neorickettsia spp. and Wolbachia pipientis.</title>
        <authorList>
            <person name="Taillardat-Bisch A.V."/>
            <person name="Raoult D."/>
            <person name="Drancourt M."/>
        </authorList>
    </citation>
    <scope>NUCLEOTIDE SEQUENCE [GENOMIC DNA]</scope>
    <source>
        <strain>ATCC VR-367 / Miyayama</strain>
    </source>
</reference>
<accession>Q93MK9</accession>
<name>RPOB_NEOSE</name>
<comment type="function">
    <text evidence="1">DNA-dependent RNA polymerase catalyzes the transcription of DNA into RNA using the four ribonucleoside triphosphates as substrates.</text>
</comment>
<comment type="catalytic activity">
    <reaction evidence="1">
        <text>RNA(n) + a ribonucleoside 5'-triphosphate = RNA(n+1) + diphosphate</text>
        <dbReference type="Rhea" id="RHEA:21248"/>
        <dbReference type="Rhea" id="RHEA-COMP:14527"/>
        <dbReference type="Rhea" id="RHEA-COMP:17342"/>
        <dbReference type="ChEBI" id="CHEBI:33019"/>
        <dbReference type="ChEBI" id="CHEBI:61557"/>
        <dbReference type="ChEBI" id="CHEBI:140395"/>
        <dbReference type="EC" id="2.7.7.6"/>
    </reaction>
</comment>
<comment type="subunit">
    <text evidence="1">The RNAP catalytic core consists of 2 alpha, 1 beta, 1 beta' and 1 omega subunit. When a sigma factor is associated with the core the holoenzyme is formed, which can initiate transcription.</text>
</comment>
<comment type="similarity">
    <text evidence="1">Belongs to the RNA polymerase beta chain family.</text>
</comment>